<proteinExistence type="inferred from homology"/>
<accession>A7M991</accession>
<feature type="chain" id="PRO_0000362189" description="Protein PsbN">
    <location>
        <begin position="1"/>
        <end position="43"/>
    </location>
</feature>
<feature type="transmembrane region" description="Helical" evidence="1">
    <location>
        <begin position="7"/>
        <end position="29"/>
    </location>
</feature>
<organism>
    <name type="scientific">Cuscuta reflexa</name>
    <name type="common">Southern Asian dodder</name>
    <dbReference type="NCBI Taxonomy" id="4129"/>
    <lineage>
        <taxon>Eukaryota</taxon>
        <taxon>Viridiplantae</taxon>
        <taxon>Streptophyta</taxon>
        <taxon>Embryophyta</taxon>
        <taxon>Tracheophyta</taxon>
        <taxon>Spermatophyta</taxon>
        <taxon>Magnoliopsida</taxon>
        <taxon>eudicotyledons</taxon>
        <taxon>Gunneridae</taxon>
        <taxon>Pentapetalae</taxon>
        <taxon>asterids</taxon>
        <taxon>lamiids</taxon>
        <taxon>Solanales</taxon>
        <taxon>Convolvulaceae</taxon>
        <taxon>Cuscuteae</taxon>
        <taxon>Cuscuta</taxon>
        <taxon>Cuscuta subgen. Monogynella</taxon>
    </lineage>
</organism>
<keyword id="KW-0472">Membrane</keyword>
<keyword id="KW-0934">Plastid</keyword>
<keyword id="KW-0812">Transmembrane</keyword>
<keyword id="KW-1133">Transmembrane helix</keyword>
<geneLocation type="plastid"/>
<name>PSBN_CUSRE</name>
<dbReference type="EMBL" id="AM711640">
    <property type="protein sequence ID" value="CAM98419.1"/>
    <property type="molecule type" value="Genomic_DNA"/>
</dbReference>
<dbReference type="RefSeq" id="YP_001430132.1">
    <property type="nucleotide sequence ID" value="NC_009766.1"/>
</dbReference>
<dbReference type="GeneID" id="5536617"/>
<dbReference type="GO" id="GO:0042170">
    <property type="term" value="C:plastid membrane"/>
    <property type="evidence" value="ECO:0007669"/>
    <property type="project" value="UniProtKB-SubCell"/>
</dbReference>
<dbReference type="GO" id="GO:0042651">
    <property type="term" value="C:thylakoid membrane"/>
    <property type="evidence" value="ECO:0007669"/>
    <property type="project" value="UniProtKB-UniRule"/>
</dbReference>
<dbReference type="GO" id="GO:0015979">
    <property type="term" value="P:photosynthesis"/>
    <property type="evidence" value="ECO:0007669"/>
    <property type="project" value="InterPro"/>
</dbReference>
<dbReference type="HAMAP" id="MF_00293">
    <property type="entry name" value="PSII_PsbN"/>
    <property type="match status" value="1"/>
</dbReference>
<dbReference type="InterPro" id="IPR003398">
    <property type="entry name" value="PSII_PsbN"/>
</dbReference>
<dbReference type="PANTHER" id="PTHR35326">
    <property type="entry name" value="PROTEIN PSBN"/>
    <property type="match status" value="1"/>
</dbReference>
<dbReference type="PANTHER" id="PTHR35326:SF3">
    <property type="entry name" value="PROTEIN PSBN"/>
    <property type="match status" value="1"/>
</dbReference>
<dbReference type="Pfam" id="PF02468">
    <property type="entry name" value="PsbN"/>
    <property type="match status" value="1"/>
</dbReference>
<comment type="function">
    <text evidence="1">May play a role in photosystem I and II biogenesis.</text>
</comment>
<comment type="subcellular location">
    <subcellularLocation>
        <location evidence="2">Plastid membrane</location>
        <topology evidence="1">Single-pass membrane protein</topology>
    </subcellularLocation>
</comment>
<comment type="similarity">
    <text evidence="1">Belongs to the PsbN family.</text>
</comment>
<comment type="caution">
    <text evidence="2">Young tissue from this organism is photosynthetic and contains some thylakoids, although the photosynthetic activity does not exceed the light compensation point.</text>
</comment>
<comment type="caution">
    <text evidence="1">Originally thought to be a component of PSII; based on experiments in Synechocystis, N.tabacum and barley, and its absence from PSII in T.elongatus and T.vulcanus, this is probably not true.</text>
</comment>
<sequence>METATLITIFLSGLLVSFTGYALYTAFGQPSQQLRDPFEEHGD</sequence>
<evidence type="ECO:0000255" key="1">
    <source>
        <dbReference type="HAMAP-Rule" id="MF_00293"/>
    </source>
</evidence>
<evidence type="ECO:0000305" key="2"/>
<protein>
    <recommendedName>
        <fullName evidence="1">Protein PsbN</fullName>
    </recommendedName>
</protein>
<gene>
    <name evidence="1" type="primary">psbN</name>
</gene>
<reference key="1">
    <citation type="journal article" date="2007" name="BMC Plant Biol.">
        <title>Complete DNA sequences of the plastid genomes of two parasitic flowering plant species, Cuscuta reflexa and Cuscuta gronovii.</title>
        <authorList>
            <person name="Funk H.T."/>
            <person name="Berg S."/>
            <person name="Krupinska K."/>
            <person name="Maier U.-G."/>
            <person name="Krause K."/>
        </authorList>
    </citation>
    <scope>NUCLEOTIDE SEQUENCE [LARGE SCALE GENOMIC DNA]</scope>
</reference>